<gene>
    <name type="primary">MTARC2</name>
    <name type="synonym">MARC2</name>
    <name type="synonym">MOSC2</name>
</gene>
<sequence length="336" mass="37288">MGAAGSSALARLGLPALPGPRWLGVAALGLAAVALGAVAWRRARPGRRRRLQQVGTVSELWIYPIKSCKGVSVDAAECTALGLRSGHLRDRFWLVIKEDGHMVTGRQEPQLVLVSITYEDDCLILRAPGMDQLVLPTKLLSSNKLHDCRVFGLDIQGRDCGDEAAQWFTSFLKTDAFRLVQFEKNMKARASNEIFPSLDKNYQVAYPDCSPVMILSEASLADLNTRMEKKVKINNFRPNIVVTGCSAFEEDTWDELLIGNVEMKKILACPRCIMTTVDPDTGVIDRKEPLETLKSYRLCDPSEKSIYKSSPLFGIYYSVEKIGSLKVGDPVYQMVQ</sequence>
<reference key="1">
    <citation type="submission" date="2006-05" db="EMBL/GenBank/DDBJ databases">
        <authorList>
            <consortium name="NIH - Mammalian Gene Collection (MGC) project"/>
        </authorList>
    </citation>
    <scope>NUCLEOTIDE SEQUENCE [LARGE SCALE MRNA]</scope>
    <source>
        <strain>Hereford</strain>
        <tissue>Hypothalamus</tissue>
    </source>
</reference>
<dbReference type="EC" id="1.7.-.-"/>
<dbReference type="EMBL" id="BC116001">
    <property type="protein sequence ID" value="AAI16002.1"/>
    <property type="molecule type" value="mRNA"/>
</dbReference>
<dbReference type="RefSeq" id="NP_001069848.1">
    <property type="nucleotide sequence ID" value="NM_001076380.2"/>
</dbReference>
<dbReference type="RefSeq" id="XP_024832272.1">
    <property type="nucleotide sequence ID" value="XM_024976504.2"/>
</dbReference>
<dbReference type="SMR" id="Q1LZH1"/>
<dbReference type="FunCoup" id="Q1LZH1">
    <property type="interactions" value="986"/>
</dbReference>
<dbReference type="STRING" id="9913.ENSBTAP00000008440"/>
<dbReference type="PaxDb" id="9913-ENSBTAP00000008440"/>
<dbReference type="PeptideAtlas" id="Q1LZH1"/>
<dbReference type="Ensembl" id="ENSBTAT00000008440.5">
    <property type="protein sequence ID" value="ENSBTAP00000008440.5"/>
    <property type="gene ID" value="ENSBTAG00000016277.8"/>
</dbReference>
<dbReference type="GeneID" id="615506"/>
<dbReference type="KEGG" id="bta:615506"/>
<dbReference type="CTD" id="54996"/>
<dbReference type="VEuPathDB" id="HostDB:ENSBTAG00000016277"/>
<dbReference type="VGNC" id="VGNC:97289">
    <property type="gene designation" value="MTARC2"/>
</dbReference>
<dbReference type="eggNOG" id="KOG2362">
    <property type="taxonomic scope" value="Eukaryota"/>
</dbReference>
<dbReference type="GeneTree" id="ENSGT00940000159665"/>
<dbReference type="HOGENOM" id="CLU_028286_6_0_1"/>
<dbReference type="InParanoid" id="Q1LZH1"/>
<dbReference type="OMA" id="AHDRSFM"/>
<dbReference type="OrthoDB" id="17255at2759"/>
<dbReference type="Reactome" id="R-BTA-211945">
    <property type="pathway name" value="Phase I - Functionalization of compounds"/>
</dbReference>
<dbReference type="Proteomes" id="UP000009136">
    <property type="component" value="Chromosome 16"/>
</dbReference>
<dbReference type="Bgee" id="ENSBTAG00000016277">
    <property type="expression patterns" value="Expressed in liver and 103 other cell types or tissues"/>
</dbReference>
<dbReference type="GO" id="GO:0005741">
    <property type="term" value="C:mitochondrial outer membrane"/>
    <property type="evidence" value="ECO:0007669"/>
    <property type="project" value="UniProtKB-SubCell"/>
</dbReference>
<dbReference type="GO" id="GO:0005777">
    <property type="term" value="C:peroxisome"/>
    <property type="evidence" value="ECO:0007669"/>
    <property type="project" value="UniProtKB-SubCell"/>
</dbReference>
<dbReference type="GO" id="GO:0030151">
    <property type="term" value="F:molybdenum ion binding"/>
    <property type="evidence" value="ECO:0000318"/>
    <property type="project" value="GO_Central"/>
</dbReference>
<dbReference type="GO" id="GO:0043546">
    <property type="term" value="F:molybdopterin cofactor binding"/>
    <property type="evidence" value="ECO:0000318"/>
    <property type="project" value="GO_Central"/>
</dbReference>
<dbReference type="GO" id="GO:0008940">
    <property type="term" value="F:nitrate reductase activity"/>
    <property type="evidence" value="ECO:0000318"/>
    <property type="project" value="GO_Central"/>
</dbReference>
<dbReference type="GO" id="GO:0098809">
    <property type="term" value="F:nitrite reductase activity"/>
    <property type="evidence" value="ECO:0007669"/>
    <property type="project" value="Ensembl"/>
</dbReference>
<dbReference type="GO" id="GO:0030170">
    <property type="term" value="F:pyridoxal phosphate binding"/>
    <property type="evidence" value="ECO:0007669"/>
    <property type="project" value="InterPro"/>
</dbReference>
<dbReference type="GO" id="GO:0070458">
    <property type="term" value="P:cellular detoxification of nitrogen compound"/>
    <property type="evidence" value="ECO:0007669"/>
    <property type="project" value="Ensembl"/>
</dbReference>
<dbReference type="GO" id="GO:0042126">
    <property type="term" value="P:nitrate metabolic process"/>
    <property type="evidence" value="ECO:0000318"/>
    <property type="project" value="GO_Central"/>
</dbReference>
<dbReference type="GO" id="GO:0006809">
    <property type="term" value="P:nitric oxide biosynthetic process"/>
    <property type="evidence" value="ECO:0007669"/>
    <property type="project" value="Ensembl"/>
</dbReference>
<dbReference type="InterPro" id="IPR005302">
    <property type="entry name" value="MoCF_Sase_C"/>
</dbReference>
<dbReference type="InterPro" id="IPR005303">
    <property type="entry name" value="MOCOS_middle"/>
</dbReference>
<dbReference type="InterPro" id="IPR011037">
    <property type="entry name" value="Pyrv_Knase-like_insert_dom_sf"/>
</dbReference>
<dbReference type="PANTHER" id="PTHR14237:SF27">
    <property type="entry name" value="MITOCHONDRIAL AMIDOXIME REDUCING COMPONENT 2"/>
    <property type="match status" value="1"/>
</dbReference>
<dbReference type="PANTHER" id="PTHR14237">
    <property type="entry name" value="MOLYBDOPTERIN COFACTOR SULFURASE MOSC"/>
    <property type="match status" value="1"/>
</dbReference>
<dbReference type="Pfam" id="PF03473">
    <property type="entry name" value="MOSC"/>
    <property type="match status" value="1"/>
</dbReference>
<dbReference type="Pfam" id="PF03476">
    <property type="entry name" value="MOSC_N"/>
    <property type="match status" value="1"/>
</dbReference>
<dbReference type="SUPFAM" id="SSF141673">
    <property type="entry name" value="MOSC N-terminal domain-like"/>
    <property type="match status" value="1"/>
</dbReference>
<dbReference type="SUPFAM" id="SSF50800">
    <property type="entry name" value="PK beta-barrel domain-like"/>
    <property type="match status" value="1"/>
</dbReference>
<dbReference type="PROSITE" id="PS51340">
    <property type="entry name" value="MOSC"/>
    <property type="match status" value="1"/>
</dbReference>
<evidence type="ECO:0000250" key="1"/>
<evidence type="ECO:0000250" key="2">
    <source>
        <dbReference type="UniProtKB" id="Q969Z3"/>
    </source>
</evidence>
<evidence type="ECO:0000255" key="3"/>
<evidence type="ECO:0000255" key="4">
    <source>
        <dbReference type="PROSITE-ProRule" id="PRU00670"/>
    </source>
</evidence>
<proteinExistence type="evidence at transcript level"/>
<organism>
    <name type="scientific">Bos taurus</name>
    <name type="common">Bovine</name>
    <dbReference type="NCBI Taxonomy" id="9913"/>
    <lineage>
        <taxon>Eukaryota</taxon>
        <taxon>Metazoa</taxon>
        <taxon>Chordata</taxon>
        <taxon>Craniata</taxon>
        <taxon>Vertebrata</taxon>
        <taxon>Euteleostomi</taxon>
        <taxon>Mammalia</taxon>
        <taxon>Eutheria</taxon>
        <taxon>Laurasiatheria</taxon>
        <taxon>Artiodactyla</taxon>
        <taxon>Ruminantia</taxon>
        <taxon>Pecora</taxon>
        <taxon>Bovidae</taxon>
        <taxon>Bovinae</taxon>
        <taxon>Bos</taxon>
    </lineage>
</organism>
<keyword id="KW-1017">Isopeptide bond</keyword>
<keyword id="KW-0472">Membrane</keyword>
<keyword id="KW-0496">Mitochondrion</keyword>
<keyword id="KW-1000">Mitochondrion outer membrane</keyword>
<keyword id="KW-0500">Molybdenum</keyword>
<keyword id="KW-0560">Oxidoreductase</keyword>
<keyword id="KW-0576">Peroxisome</keyword>
<keyword id="KW-1185">Reference proteome</keyword>
<keyword id="KW-0809">Transit peptide</keyword>
<keyword id="KW-0832">Ubl conjugation</keyword>
<feature type="transit peptide" description="Mitochondrion" evidence="3">
    <location>
        <begin position="1"/>
        <end position="35"/>
    </location>
</feature>
<feature type="chain" id="PRO_0000273339" description="Mitochondrial amidoxime reducing component 2">
    <location>
        <begin position="36"/>
        <end position="336"/>
    </location>
</feature>
<feature type="domain" description="MOSC" evidence="4">
    <location>
        <begin position="188"/>
        <end position="334"/>
    </location>
</feature>
<feature type="cross-link" description="Glycyl lysine isopeptide (Lys-Gly) (interchain with G-Cter in ubiquitin)" evidence="2">
    <location>
        <position position="138"/>
    </location>
</feature>
<feature type="cross-link" description="Glycyl lysine isopeptide (Lys-Gly) (interchain with G-Cter in ubiquitin)" evidence="2">
    <location>
        <position position="144"/>
    </location>
</feature>
<feature type="cross-link" description="Glycyl lysine isopeptide (Lys-Gly) (interchain with G-Cter in ubiquitin)" evidence="2">
    <location>
        <position position="173"/>
    </location>
</feature>
<feature type="cross-link" description="Glycyl lysine isopeptide (Lys-Gly) (interchain with G-Cter in ubiquitin)" evidence="2">
    <location>
        <position position="187"/>
    </location>
</feature>
<feature type="cross-link" description="Glycyl lysine isopeptide (Lys-Gly) (interchain with G-Cter in ubiquitin)" evidence="2">
    <location>
        <position position="287"/>
    </location>
</feature>
<feature type="cross-link" description="Glycyl lysine isopeptide (Lys-Gly) (interchain with G-Cter in ubiquitin)" evidence="2">
    <location>
        <position position="294"/>
    </location>
</feature>
<name>MARC2_BOVIN</name>
<comment type="function">
    <text evidence="2">Catalyzes the reduction of N-oxygenated molecules, acting as a counterpart of cytochrome P450 and flavin-containing monooxygenases in metabolic cycles. As a component of prodrug-converting system, reduces a multitude of N-hydroxylated prodrugs particularly amidoximes, leading to increased drug bioavailability. May be involved in mitochondrial N(omega)-hydroxy-L-arginine (NOHA) reduction, regulating endogenous nitric oxide levels and biosynthesis. Postulated to cleave the N-OH bond of N-hydroxylated substrates in concert with electron transfer from NADH to cytochrome b5 reductase then to cytochrome b5, the ultimate electron donor that primes the active site for substrate reduction.</text>
</comment>
<comment type="catalytic activity">
    <reaction evidence="2">
        <text>N(omega)-hydroxy-L-arginine + 2 Fe(II)-[cytochrome b5] + 2 H(+) = L-arginine + 2 Fe(III)-[cytochrome b5] + H2O</text>
        <dbReference type="Rhea" id="RHEA:61644"/>
        <dbReference type="Rhea" id="RHEA-COMP:10438"/>
        <dbReference type="Rhea" id="RHEA-COMP:10439"/>
        <dbReference type="ChEBI" id="CHEBI:15377"/>
        <dbReference type="ChEBI" id="CHEBI:15378"/>
        <dbReference type="ChEBI" id="CHEBI:29033"/>
        <dbReference type="ChEBI" id="CHEBI:29034"/>
        <dbReference type="ChEBI" id="CHEBI:32682"/>
        <dbReference type="ChEBI" id="CHEBI:60107"/>
    </reaction>
    <physiologicalReaction direction="left-to-right" evidence="2">
        <dbReference type="Rhea" id="RHEA:61645"/>
    </physiologicalReaction>
</comment>
<comment type="cofactor">
    <cofactor evidence="1">
        <name>Mo-molybdopterin</name>
        <dbReference type="ChEBI" id="CHEBI:71302"/>
    </cofactor>
    <text evidence="1">Binds 1 Mo-molybdopterin (Mo-MPT) cofactor per subunit.</text>
</comment>
<comment type="subunit">
    <text evidence="1">Component of a complex composed of cytochrome b5, NADH-cytochrome b5 reductase (CYB5R3) and MTARC2.</text>
</comment>
<comment type="subcellular location">
    <subcellularLocation>
        <location evidence="1">Mitochondrion outer membrane</location>
        <topology evidence="1">Peripheral membrane protein</topology>
    </subcellularLocation>
    <subcellularLocation>
        <location evidence="1">Peroxisome</location>
    </subcellularLocation>
</comment>
<comment type="PTM">
    <text evidence="2">Ubiquitinated by PRKN during mitophagy, leading to its degradation and enhancement of mitophagy. Deubiquitinated by USP30.</text>
</comment>
<accession>Q1LZH1</accession>
<protein>
    <recommendedName>
        <fullName>Mitochondrial amidoxime reducing component 2</fullName>
        <shortName>mARC2</shortName>
        <ecNumber>1.7.-.-</ecNumber>
    </recommendedName>
    <alternativeName>
        <fullName>Molybdenum cofactor sulfurase C-terminal domain-containing protein 2</fullName>
        <shortName>MOSC domain-containing protein 2</shortName>
        <shortName>Moco sulfurase C-terminal domain-containing protein 2</shortName>
    </alternativeName>
</protein>